<gene>
    <name type="ORF">F12A10.6</name>
</gene>
<reference key="1">
    <citation type="journal article" date="1998" name="Science">
        <title>Genome sequence of the nematode C. elegans: a platform for investigating biology.</title>
        <authorList>
            <consortium name="The C. elegans sequencing consortium"/>
        </authorList>
    </citation>
    <scope>NUCLEOTIDE SEQUENCE [LARGE SCALE GENOMIC DNA]</scope>
    <source>
        <strain>Bristol N2</strain>
    </source>
</reference>
<sequence>MFYNVFHSFFCEIFEKKLSQLQMLADPERHDISKLHTVAKRIGHNLNGSKRDKEKVRQAVEMVGAAKIFNSGNLPICWKFQFRQFADLPENSIPAICRFAGKNRLPPTSNFHNILENVSSNIAKN</sequence>
<keyword id="KW-1185">Reference proteome</keyword>
<protein>
    <recommendedName>
        <fullName>Uncharacterized protein F12A10.6</fullName>
    </recommendedName>
</protein>
<organism>
    <name type="scientific">Caenorhabditis elegans</name>
    <dbReference type="NCBI Taxonomy" id="6239"/>
    <lineage>
        <taxon>Eukaryota</taxon>
        <taxon>Metazoa</taxon>
        <taxon>Ecdysozoa</taxon>
        <taxon>Nematoda</taxon>
        <taxon>Chromadorea</taxon>
        <taxon>Rhabditida</taxon>
        <taxon>Rhabditina</taxon>
        <taxon>Rhabditomorpha</taxon>
        <taxon>Rhabditoidea</taxon>
        <taxon>Rhabditidae</taxon>
        <taxon>Peloderinae</taxon>
        <taxon>Caenorhabditis</taxon>
    </lineage>
</organism>
<proteinExistence type="predicted"/>
<feature type="chain" id="PRO_0000065292" description="Uncharacterized protein F12A10.6">
    <location>
        <begin position="1"/>
        <end position="125"/>
    </location>
</feature>
<name>YSH6_CAEEL</name>
<accession>Q09947</accession>
<dbReference type="EMBL" id="FO081122">
    <property type="protein sequence ID" value="CCD69293.1"/>
    <property type="molecule type" value="Genomic_DNA"/>
</dbReference>
<dbReference type="PIR" id="T16042">
    <property type="entry name" value="T16042"/>
</dbReference>
<dbReference type="RefSeq" id="NP_495046.1">
    <property type="nucleotide sequence ID" value="NM_062645.1"/>
</dbReference>
<dbReference type="SMR" id="Q09947"/>
<dbReference type="PaxDb" id="6239-F12A10.6"/>
<dbReference type="EnsemblMetazoa" id="F12A10.6.1">
    <property type="protein sequence ID" value="F12A10.6.1"/>
    <property type="gene ID" value="WBGene00017395"/>
</dbReference>
<dbReference type="GeneID" id="184374"/>
<dbReference type="KEGG" id="cel:CELE_F12A10.6"/>
<dbReference type="UCSC" id="F12A10.6">
    <property type="organism name" value="c. elegans"/>
</dbReference>
<dbReference type="AGR" id="WB:WBGene00017395"/>
<dbReference type="CTD" id="184374"/>
<dbReference type="WormBase" id="F12A10.6">
    <property type="protein sequence ID" value="CE01909"/>
    <property type="gene ID" value="WBGene00017395"/>
</dbReference>
<dbReference type="eggNOG" id="KOG2464">
    <property type="taxonomic scope" value="Eukaryota"/>
</dbReference>
<dbReference type="HOGENOM" id="CLU_1994666_0_0_1"/>
<dbReference type="InParanoid" id="Q09947"/>
<dbReference type="PRO" id="PR:Q09947"/>
<dbReference type="Proteomes" id="UP000001940">
    <property type="component" value="Chromosome II"/>
</dbReference>
<dbReference type="Bgee" id="WBGene00017395">
    <property type="expression patterns" value="Expressed in pharyngeal muscle cell (C elegans) and 2 other cell types or tissues"/>
</dbReference>